<name>DNAA_EHRRG</name>
<proteinExistence type="inferred from homology"/>
<accession>Q5FHH8</accession>
<protein>
    <recommendedName>
        <fullName evidence="1">Chromosomal replication initiator protein DnaA</fullName>
    </recommendedName>
</protein>
<gene>
    <name evidence="1" type="primary">dnaA</name>
    <name type="ordered locus">ERGA_CDS_02880</name>
</gene>
<evidence type="ECO:0000255" key="1">
    <source>
        <dbReference type="HAMAP-Rule" id="MF_00377"/>
    </source>
</evidence>
<comment type="function">
    <text evidence="1">Plays an essential role in the initiation and regulation of chromosomal replication. ATP-DnaA binds to the origin of replication (oriC) to initiate formation of the DNA replication initiation complex once per cell cycle. Binds the DnaA box (a 9 base pair repeat at the origin) and separates the double-stranded (ds)DNA. Forms a right-handed helical filament on oriC DNA; dsDNA binds to the exterior of the filament while single-stranded (ss)DNA is stabiized in the filament's interior. The ATP-DnaA-oriC complex binds and stabilizes one strand of the AT-rich DNA unwinding element (DUE), permitting loading of DNA polymerase. After initiation quickly degrades to an ADP-DnaA complex that is not apt for DNA replication. Binds acidic phospholipids.</text>
</comment>
<comment type="subunit">
    <text evidence="1">Oligomerizes as a right-handed, spiral filament on DNA at oriC.</text>
</comment>
<comment type="subcellular location">
    <subcellularLocation>
        <location evidence="1">Cytoplasm</location>
    </subcellularLocation>
</comment>
<comment type="domain">
    <text evidence="1">Domain I is involved in oligomerization and binding regulators, domain II is flexibile and of varying length in different bacteria, domain III forms the AAA+ region, while domain IV binds dsDNA.</text>
</comment>
<comment type="similarity">
    <text evidence="1">Belongs to the DnaA family.</text>
</comment>
<reference key="1">
    <citation type="journal article" date="2006" name="J. Bacteriol.">
        <title>Comparative genomic analysis of three strains of Ehrlichia ruminantium reveals an active process of genome size plasticity.</title>
        <authorList>
            <person name="Frutos R."/>
            <person name="Viari A."/>
            <person name="Ferraz C."/>
            <person name="Morgat A."/>
            <person name="Eychenie S."/>
            <person name="Kandassamy Y."/>
            <person name="Chantal I."/>
            <person name="Bensaid A."/>
            <person name="Coissac E."/>
            <person name="Vachiery N."/>
            <person name="Demaille J."/>
            <person name="Martinez D."/>
        </authorList>
    </citation>
    <scope>NUCLEOTIDE SEQUENCE [LARGE SCALE GENOMIC DNA]</scope>
    <source>
        <strain>Gardel</strain>
    </source>
</reference>
<feature type="chain" id="PRO_0000114176" description="Chromosomal replication initiator protein DnaA">
    <location>
        <begin position="1"/>
        <end position="464"/>
    </location>
</feature>
<feature type="region of interest" description="Domain I, interacts with DnaA modulators" evidence="1">
    <location>
        <begin position="1"/>
        <end position="90"/>
    </location>
</feature>
<feature type="region of interest" description="Domain II" evidence="1">
    <location>
        <begin position="90"/>
        <end position="126"/>
    </location>
</feature>
<feature type="region of interest" description="Domain III, AAA+ region" evidence="1">
    <location>
        <begin position="127"/>
        <end position="345"/>
    </location>
</feature>
<feature type="region of interest" description="Domain IV, binds dsDNA" evidence="1">
    <location>
        <begin position="346"/>
        <end position="464"/>
    </location>
</feature>
<feature type="binding site" evidence="1">
    <location>
        <position position="173"/>
    </location>
    <ligand>
        <name>ATP</name>
        <dbReference type="ChEBI" id="CHEBI:30616"/>
    </ligand>
</feature>
<feature type="binding site" evidence="1">
    <location>
        <position position="175"/>
    </location>
    <ligand>
        <name>ATP</name>
        <dbReference type="ChEBI" id="CHEBI:30616"/>
    </ligand>
</feature>
<feature type="binding site" evidence="1">
    <location>
        <position position="176"/>
    </location>
    <ligand>
        <name>ATP</name>
        <dbReference type="ChEBI" id="CHEBI:30616"/>
    </ligand>
</feature>
<feature type="binding site" evidence="1">
    <location>
        <position position="177"/>
    </location>
    <ligand>
        <name>ATP</name>
        <dbReference type="ChEBI" id="CHEBI:30616"/>
    </ligand>
</feature>
<keyword id="KW-0067">ATP-binding</keyword>
<keyword id="KW-0963">Cytoplasm</keyword>
<keyword id="KW-0235">DNA replication</keyword>
<keyword id="KW-0238">DNA-binding</keyword>
<keyword id="KW-0446">Lipid-binding</keyword>
<keyword id="KW-0547">Nucleotide-binding</keyword>
<dbReference type="EMBL" id="CR925677">
    <property type="protein sequence ID" value="CAI27740.1"/>
    <property type="molecule type" value="Genomic_DNA"/>
</dbReference>
<dbReference type="RefSeq" id="WP_011154971.1">
    <property type="nucleotide sequence ID" value="NC_006831.1"/>
</dbReference>
<dbReference type="SMR" id="Q5FHH8"/>
<dbReference type="GeneID" id="33057866"/>
<dbReference type="KEGG" id="erg:ERGA_CDS_02880"/>
<dbReference type="HOGENOM" id="CLU_026910_3_0_5"/>
<dbReference type="OrthoDB" id="9807019at2"/>
<dbReference type="Proteomes" id="UP000000533">
    <property type="component" value="Chromosome"/>
</dbReference>
<dbReference type="GO" id="GO:0005737">
    <property type="term" value="C:cytoplasm"/>
    <property type="evidence" value="ECO:0007669"/>
    <property type="project" value="UniProtKB-SubCell"/>
</dbReference>
<dbReference type="GO" id="GO:0005886">
    <property type="term" value="C:plasma membrane"/>
    <property type="evidence" value="ECO:0007669"/>
    <property type="project" value="TreeGrafter"/>
</dbReference>
<dbReference type="GO" id="GO:0005524">
    <property type="term" value="F:ATP binding"/>
    <property type="evidence" value="ECO:0007669"/>
    <property type="project" value="UniProtKB-UniRule"/>
</dbReference>
<dbReference type="GO" id="GO:0016887">
    <property type="term" value="F:ATP hydrolysis activity"/>
    <property type="evidence" value="ECO:0007669"/>
    <property type="project" value="InterPro"/>
</dbReference>
<dbReference type="GO" id="GO:0003688">
    <property type="term" value="F:DNA replication origin binding"/>
    <property type="evidence" value="ECO:0007669"/>
    <property type="project" value="UniProtKB-UniRule"/>
</dbReference>
<dbReference type="GO" id="GO:0008289">
    <property type="term" value="F:lipid binding"/>
    <property type="evidence" value="ECO:0007669"/>
    <property type="project" value="UniProtKB-KW"/>
</dbReference>
<dbReference type="GO" id="GO:0006270">
    <property type="term" value="P:DNA replication initiation"/>
    <property type="evidence" value="ECO:0007669"/>
    <property type="project" value="UniProtKB-UniRule"/>
</dbReference>
<dbReference type="GO" id="GO:0006275">
    <property type="term" value="P:regulation of DNA replication"/>
    <property type="evidence" value="ECO:0007669"/>
    <property type="project" value="UniProtKB-UniRule"/>
</dbReference>
<dbReference type="CDD" id="cd00009">
    <property type="entry name" value="AAA"/>
    <property type="match status" value="1"/>
</dbReference>
<dbReference type="CDD" id="cd06571">
    <property type="entry name" value="Bac_DnaA_C"/>
    <property type="match status" value="1"/>
</dbReference>
<dbReference type="FunFam" id="3.40.50.300:FF:000668">
    <property type="entry name" value="Chromosomal replication initiator protein DnaA"/>
    <property type="match status" value="1"/>
</dbReference>
<dbReference type="Gene3D" id="1.10.1750.10">
    <property type="match status" value="1"/>
</dbReference>
<dbReference type="Gene3D" id="1.10.8.60">
    <property type="match status" value="1"/>
</dbReference>
<dbReference type="Gene3D" id="3.30.300.180">
    <property type="match status" value="1"/>
</dbReference>
<dbReference type="Gene3D" id="3.40.50.300">
    <property type="entry name" value="P-loop containing nucleotide triphosphate hydrolases"/>
    <property type="match status" value="1"/>
</dbReference>
<dbReference type="HAMAP" id="MF_00377">
    <property type="entry name" value="DnaA_bact"/>
    <property type="match status" value="1"/>
</dbReference>
<dbReference type="InterPro" id="IPR003593">
    <property type="entry name" value="AAA+_ATPase"/>
</dbReference>
<dbReference type="InterPro" id="IPR001957">
    <property type="entry name" value="Chromosome_initiator_DnaA"/>
</dbReference>
<dbReference type="InterPro" id="IPR020591">
    <property type="entry name" value="Chromosome_initiator_DnaA-like"/>
</dbReference>
<dbReference type="InterPro" id="IPR018312">
    <property type="entry name" value="Chromosome_initiator_DnaA_CS"/>
</dbReference>
<dbReference type="InterPro" id="IPR013159">
    <property type="entry name" value="DnaA_C"/>
</dbReference>
<dbReference type="InterPro" id="IPR013317">
    <property type="entry name" value="DnaA_dom"/>
</dbReference>
<dbReference type="InterPro" id="IPR024633">
    <property type="entry name" value="DnaA_N_dom"/>
</dbReference>
<dbReference type="InterPro" id="IPR038454">
    <property type="entry name" value="DnaA_N_sf"/>
</dbReference>
<dbReference type="InterPro" id="IPR027417">
    <property type="entry name" value="P-loop_NTPase"/>
</dbReference>
<dbReference type="InterPro" id="IPR010921">
    <property type="entry name" value="Trp_repressor/repl_initiator"/>
</dbReference>
<dbReference type="NCBIfam" id="TIGR00362">
    <property type="entry name" value="DnaA"/>
    <property type="match status" value="1"/>
</dbReference>
<dbReference type="PANTHER" id="PTHR30050">
    <property type="entry name" value="CHROMOSOMAL REPLICATION INITIATOR PROTEIN DNAA"/>
    <property type="match status" value="1"/>
</dbReference>
<dbReference type="PANTHER" id="PTHR30050:SF2">
    <property type="entry name" value="CHROMOSOMAL REPLICATION INITIATOR PROTEIN DNAA"/>
    <property type="match status" value="1"/>
</dbReference>
<dbReference type="Pfam" id="PF00308">
    <property type="entry name" value="Bac_DnaA"/>
    <property type="match status" value="1"/>
</dbReference>
<dbReference type="Pfam" id="PF08299">
    <property type="entry name" value="Bac_DnaA_C"/>
    <property type="match status" value="1"/>
</dbReference>
<dbReference type="Pfam" id="PF11638">
    <property type="entry name" value="DnaA_N"/>
    <property type="match status" value="1"/>
</dbReference>
<dbReference type="PRINTS" id="PR00051">
    <property type="entry name" value="DNAA"/>
</dbReference>
<dbReference type="SMART" id="SM00382">
    <property type="entry name" value="AAA"/>
    <property type="match status" value="1"/>
</dbReference>
<dbReference type="SMART" id="SM00760">
    <property type="entry name" value="Bac_DnaA_C"/>
    <property type="match status" value="1"/>
</dbReference>
<dbReference type="SUPFAM" id="SSF52540">
    <property type="entry name" value="P-loop containing nucleoside triphosphate hydrolases"/>
    <property type="match status" value="1"/>
</dbReference>
<dbReference type="SUPFAM" id="SSF48295">
    <property type="entry name" value="TrpR-like"/>
    <property type="match status" value="1"/>
</dbReference>
<dbReference type="PROSITE" id="PS01008">
    <property type="entry name" value="DNAA"/>
    <property type="match status" value="1"/>
</dbReference>
<sequence>MNNDNTEVLENYPQDGLQSNSHIIWKGIQSRLHKFYGNAIYDSWLSVLLYVSTESGKVLLSAPTRFIKEWILVHYLDQILKYWQDEDQSICSVDICVVSNQDPNLLVDIKDRVDRGIKGNCDNVSSPLDPRFTFDNFVVGKPNELAFAAARRVAESNSPISGSNPLFLYGGVGLGKTHLMHAIAWYIIKSCSKRKIAYLSAEKFMYQYVTALRSKDIMLFKEQFRSVDILMVDDVQFISGKDSTQEEFFHTFNALIDQNKQLVISADRSPSDLDGVEERIKSRLGWGLVADINETTFELRLGILQLKVEKMGINIPNKVLEFLAKNIKSNIRELEGALNKVVAHSSLVGCSITLDTASDILSDLLRANHKSVTLECIQKKVAEFFNIKVSDMYSTRRLRTLARPRQIAMYLSKKLTQKSLPEIGKSFGGRDHATVIHAVKQIEKLMDTDSKLRDDINLLNRMLR</sequence>
<organism>
    <name type="scientific">Ehrlichia ruminantium (strain Gardel)</name>
    <dbReference type="NCBI Taxonomy" id="302409"/>
    <lineage>
        <taxon>Bacteria</taxon>
        <taxon>Pseudomonadati</taxon>
        <taxon>Pseudomonadota</taxon>
        <taxon>Alphaproteobacteria</taxon>
        <taxon>Rickettsiales</taxon>
        <taxon>Anaplasmataceae</taxon>
        <taxon>Ehrlichia</taxon>
    </lineage>
</organism>